<sequence length="154" mass="17750">MRKQIEIFTDGSCLGNPGVGGIGVVLRYKQHEKTLSKGYFQTTNNRMELRAVIEALNLLKEPCEIILHSDSQYMKNGITQWIFNWKKNNWRASTGKPVKNQDLWIALDSAIQPHTIHWRWVKGHSGHRENEMCDELAKQGAENPTLEDTGYRQD</sequence>
<keyword id="KW-0963">Cytoplasm</keyword>
<keyword id="KW-0255">Endonuclease</keyword>
<keyword id="KW-0378">Hydrolase</keyword>
<keyword id="KW-0460">Magnesium</keyword>
<keyword id="KW-0479">Metal-binding</keyword>
<keyword id="KW-0540">Nuclease</keyword>
<keyword id="KW-1185">Reference proteome</keyword>
<dbReference type="EC" id="3.1.26.4" evidence="1"/>
<dbReference type="EMBL" id="CP000746">
    <property type="protein sequence ID" value="ABR74246.1"/>
    <property type="molecule type" value="Genomic_DNA"/>
</dbReference>
<dbReference type="RefSeq" id="WP_012072624.1">
    <property type="nucleotide sequence ID" value="NC_009655.1"/>
</dbReference>
<dbReference type="SMR" id="A6VMP9"/>
<dbReference type="STRING" id="339671.Asuc_0876"/>
<dbReference type="KEGG" id="asu:Asuc_0876"/>
<dbReference type="eggNOG" id="COG0328">
    <property type="taxonomic scope" value="Bacteria"/>
</dbReference>
<dbReference type="HOGENOM" id="CLU_030894_6_0_6"/>
<dbReference type="OrthoDB" id="7845843at2"/>
<dbReference type="Proteomes" id="UP000001114">
    <property type="component" value="Chromosome"/>
</dbReference>
<dbReference type="GO" id="GO:0005737">
    <property type="term" value="C:cytoplasm"/>
    <property type="evidence" value="ECO:0007669"/>
    <property type="project" value="UniProtKB-SubCell"/>
</dbReference>
<dbReference type="GO" id="GO:0000287">
    <property type="term" value="F:magnesium ion binding"/>
    <property type="evidence" value="ECO:0007669"/>
    <property type="project" value="UniProtKB-UniRule"/>
</dbReference>
<dbReference type="GO" id="GO:0003676">
    <property type="term" value="F:nucleic acid binding"/>
    <property type="evidence" value="ECO:0007669"/>
    <property type="project" value="InterPro"/>
</dbReference>
<dbReference type="GO" id="GO:0004523">
    <property type="term" value="F:RNA-DNA hybrid ribonuclease activity"/>
    <property type="evidence" value="ECO:0007669"/>
    <property type="project" value="UniProtKB-UniRule"/>
</dbReference>
<dbReference type="GO" id="GO:0043137">
    <property type="term" value="P:DNA replication, removal of RNA primer"/>
    <property type="evidence" value="ECO:0007669"/>
    <property type="project" value="TreeGrafter"/>
</dbReference>
<dbReference type="CDD" id="cd09278">
    <property type="entry name" value="RNase_HI_prokaryote_like"/>
    <property type="match status" value="1"/>
</dbReference>
<dbReference type="FunFam" id="3.30.420.10:FF:000008">
    <property type="entry name" value="Ribonuclease H"/>
    <property type="match status" value="1"/>
</dbReference>
<dbReference type="Gene3D" id="3.30.420.10">
    <property type="entry name" value="Ribonuclease H-like superfamily/Ribonuclease H"/>
    <property type="match status" value="1"/>
</dbReference>
<dbReference type="HAMAP" id="MF_00042">
    <property type="entry name" value="RNase_H"/>
    <property type="match status" value="1"/>
</dbReference>
<dbReference type="InterPro" id="IPR050092">
    <property type="entry name" value="RNase_H"/>
</dbReference>
<dbReference type="InterPro" id="IPR012337">
    <property type="entry name" value="RNaseH-like_sf"/>
</dbReference>
<dbReference type="InterPro" id="IPR002156">
    <property type="entry name" value="RNaseH_domain"/>
</dbReference>
<dbReference type="InterPro" id="IPR036397">
    <property type="entry name" value="RNaseH_sf"/>
</dbReference>
<dbReference type="InterPro" id="IPR022892">
    <property type="entry name" value="RNaseHI"/>
</dbReference>
<dbReference type="NCBIfam" id="NF001236">
    <property type="entry name" value="PRK00203.1"/>
    <property type="match status" value="1"/>
</dbReference>
<dbReference type="PANTHER" id="PTHR10642">
    <property type="entry name" value="RIBONUCLEASE H1"/>
    <property type="match status" value="1"/>
</dbReference>
<dbReference type="PANTHER" id="PTHR10642:SF26">
    <property type="entry name" value="RIBONUCLEASE H1"/>
    <property type="match status" value="1"/>
</dbReference>
<dbReference type="Pfam" id="PF00075">
    <property type="entry name" value="RNase_H"/>
    <property type="match status" value="1"/>
</dbReference>
<dbReference type="SUPFAM" id="SSF53098">
    <property type="entry name" value="Ribonuclease H-like"/>
    <property type="match status" value="1"/>
</dbReference>
<dbReference type="PROSITE" id="PS50879">
    <property type="entry name" value="RNASE_H_1"/>
    <property type="match status" value="1"/>
</dbReference>
<evidence type="ECO:0000255" key="1">
    <source>
        <dbReference type="HAMAP-Rule" id="MF_00042"/>
    </source>
</evidence>
<evidence type="ECO:0000255" key="2">
    <source>
        <dbReference type="PROSITE-ProRule" id="PRU00408"/>
    </source>
</evidence>
<accession>A6VMP9</accession>
<reference key="1">
    <citation type="journal article" date="2010" name="BMC Genomics">
        <title>A genomic perspective on the potential of Actinobacillus succinogenes for industrial succinate production.</title>
        <authorList>
            <person name="McKinlay J.B."/>
            <person name="Laivenieks M."/>
            <person name="Schindler B.D."/>
            <person name="McKinlay A.A."/>
            <person name="Siddaramappa S."/>
            <person name="Challacombe J.F."/>
            <person name="Lowry S.R."/>
            <person name="Clum A."/>
            <person name="Lapidus A.L."/>
            <person name="Burkhart K.B."/>
            <person name="Harkins V."/>
            <person name="Vieille C."/>
        </authorList>
    </citation>
    <scope>NUCLEOTIDE SEQUENCE [LARGE SCALE GENOMIC DNA]</scope>
    <source>
        <strain>ATCC 55618 / DSM 22257 / CCUG 43843 / 130Z</strain>
    </source>
</reference>
<organism>
    <name type="scientific">Actinobacillus succinogenes (strain ATCC 55618 / DSM 22257 / CCUG 43843 / 130Z)</name>
    <dbReference type="NCBI Taxonomy" id="339671"/>
    <lineage>
        <taxon>Bacteria</taxon>
        <taxon>Pseudomonadati</taxon>
        <taxon>Pseudomonadota</taxon>
        <taxon>Gammaproteobacteria</taxon>
        <taxon>Pasteurellales</taxon>
        <taxon>Pasteurellaceae</taxon>
        <taxon>Actinobacillus</taxon>
    </lineage>
</organism>
<name>RNH_ACTSZ</name>
<gene>
    <name evidence="1" type="primary">rnhA</name>
    <name type="ordered locus">Asuc_0876</name>
</gene>
<feature type="chain" id="PRO_1000074630" description="Ribonuclease H">
    <location>
        <begin position="1"/>
        <end position="154"/>
    </location>
</feature>
<feature type="domain" description="RNase H type-1" evidence="2">
    <location>
        <begin position="1"/>
        <end position="142"/>
    </location>
</feature>
<feature type="binding site" evidence="1">
    <location>
        <position position="10"/>
    </location>
    <ligand>
        <name>Mg(2+)</name>
        <dbReference type="ChEBI" id="CHEBI:18420"/>
        <label>1</label>
    </ligand>
</feature>
<feature type="binding site" evidence="1">
    <location>
        <position position="10"/>
    </location>
    <ligand>
        <name>Mg(2+)</name>
        <dbReference type="ChEBI" id="CHEBI:18420"/>
        <label>2</label>
    </ligand>
</feature>
<feature type="binding site" evidence="1">
    <location>
        <position position="48"/>
    </location>
    <ligand>
        <name>Mg(2+)</name>
        <dbReference type="ChEBI" id="CHEBI:18420"/>
        <label>1</label>
    </ligand>
</feature>
<feature type="binding site" evidence="1">
    <location>
        <position position="70"/>
    </location>
    <ligand>
        <name>Mg(2+)</name>
        <dbReference type="ChEBI" id="CHEBI:18420"/>
        <label>1</label>
    </ligand>
</feature>
<feature type="binding site" evidence="1">
    <location>
        <position position="134"/>
    </location>
    <ligand>
        <name>Mg(2+)</name>
        <dbReference type="ChEBI" id="CHEBI:18420"/>
        <label>2</label>
    </ligand>
</feature>
<comment type="function">
    <text evidence="1">Endonuclease that specifically degrades the RNA of RNA-DNA hybrids.</text>
</comment>
<comment type="catalytic activity">
    <reaction evidence="1">
        <text>Endonucleolytic cleavage to 5'-phosphomonoester.</text>
        <dbReference type="EC" id="3.1.26.4"/>
    </reaction>
</comment>
<comment type="cofactor">
    <cofactor evidence="1">
        <name>Mg(2+)</name>
        <dbReference type="ChEBI" id="CHEBI:18420"/>
    </cofactor>
    <text evidence="1">Binds 1 Mg(2+) ion per subunit. May bind a second metal ion at a regulatory site, or after substrate binding.</text>
</comment>
<comment type="subunit">
    <text evidence="1">Monomer.</text>
</comment>
<comment type="subcellular location">
    <subcellularLocation>
        <location evidence="1">Cytoplasm</location>
    </subcellularLocation>
</comment>
<comment type="similarity">
    <text evidence="1">Belongs to the RNase H family.</text>
</comment>
<protein>
    <recommendedName>
        <fullName evidence="1">Ribonuclease H</fullName>
        <shortName evidence="1">RNase H</shortName>
        <ecNumber evidence="1">3.1.26.4</ecNumber>
    </recommendedName>
</protein>
<proteinExistence type="inferred from homology"/>